<sequence length="439" mass="49903">MSSSREMRDLPLVRLPEPYKTKYELYQASSGPNGRIFQLRLSSDQNNGAISPPDLLHHQMLYFSELIPGPQATLPAESDNTAWARACRSLVSFVTWDGESAPTVGQIWMLVYAIFSLRPSEESFRLSLSGAQKDQLYAECNAAGLSTRFPTPVQPQPLYTTIEDVVVSRAAFWQGAGSPLGTRPAWLVPSISGSARKLPSEYPAFPLQYTLTSQLTNRPVHTQHPVRPAKPARGAPIYSRYIPHLDEFFAMDHLDYTNETHLQLFHTWQNDPRVAVNWKEAGTLDQHREYLRKIDEDPHQIAVLARFNNTYFAYFEIYWAKEDHMGTYYPALDWDRGRHSLVGDARFRGPHRAMAWWTSLIHYIFLDEPRTTCVVGEPKATNGPVLGYDAAHGFHVHKWGDLPHKRSAMVRCERVRFFEVVNFGNVTSNGTAKPSKSKL</sequence>
<accession>B2KWI2</accession>
<proteinExistence type="evidence at transcript level"/>
<evidence type="ECO:0000250" key="1">
    <source>
        <dbReference type="UniProtKB" id="Q4WF55"/>
    </source>
</evidence>
<evidence type="ECO:0000269" key="2">
    <source>
    </source>
</evidence>
<evidence type="ECO:0000269" key="3">
    <source>
    </source>
</evidence>
<evidence type="ECO:0000303" key="4">
    <source>
    </source>
</evidence>
<evidence type="ECO:0000305" key="5"/>
<evidence type="ECO:0000305" key="6">
    <source>
    </source>
</evidence>
<keyword id="KW-0012">Acyltransferase</keyword>
<keyword id="KW-0576">Peroxisome</keyword>
<keyword id="KW-0808">Transferase</keyword>
<name>SID3_AJECA</name>
<gene>
    <name evidence="4" type="primary">SID3</name>
</gene>
<protein>
    <recommendedName>
        <fullName evidence="4">Hydroxyornithine transacylase SID3</fullName>
        <ecNumber evidence="6">2.3.1.-</ecNumber>
    </recommendedName>
    <alternativeName>
        <fullName evidence="4">Siderophore biosynthesis cluster protein SID3</fullName>
    </alternativeName>
</protein>
<dbReference type="EC" id="2.3.1.-" evidence="6"/>
<dbReference type="EMBL" id="EU253977">
    <property type="protein sequence ID" value="ACC64455.1"/>
    <property type="molecule type" value="Genomic_DNA"/>
</dbReference>
<dbReference type="SMR" id="B2KWI2"/>
<dbReference type="GO" id="GO:0005777">
    <property type="term" value="C:peroxisome"/>
    <property type="evidence" value="ECO:0007669"/>
    <property type="project" value="UniProtKB-SubCell"/>
</dbReference>
<dbReference type="GO" id="GO:0016410">
    <property type="term" value="F:N-acyltransferase activity"/>
    <property type="evidence" value="ECO:0007669"/>
    <property type="project" value="TreeGrafter"/>
</dbReference>
<dbReference type="GO" id="GO:0019290">
    <property type="term" value="P:siderophore biosynthetic process"/>
    <property type="evidence" value="ECO:0007669"/>
    <property type="project" value="InterPro"/>
</dbReference>
<dbReference type="Gene3D" id="3.40.630.30">
    <property type="match status" value="1"/>
</dbReference>
<dbReference type="InterPro" id="IPR016181">
    <property type="entry name" value="Acyl_CoA_acyltransferase"/>
</dbReference>
<dbReference type="InterPro" id="IPR019432">
    <property type="entry name" value="Acyltransferase_MbtK/IucB-like"/>
</dbReference>
<dbReference type="PANTHER" id="PTHR31438:SF7">
    <property type="entry name" value="ACYLTRANSFERASE MBTK_IUCB-LIKE CONSERVED DOMAIN-CONTAINING PROTEIN"/>
    <property type="match status" value="1"/>
</dbReference>
<dbReference type="PANTHER" id="PTHR31438">
    <property type="entry name" value="LYSINE N-ACYLTRANSFERASE C17G9.06C-RELATED"/>
    <property type="match status" value="1"/>
</dbReference>
<dbReference type="Pfam" id="PF13523">
    <property type="entry name" value="Acetyltransf_8"/>
    <property type="match status" value="1"/>
</dbReference>
<dbReference type="SMART" id="SM01006">
    <property type="entry name" value="AlcB"/>
    <property type="match status" value="1"/>
</dbReference>
<dbReference type="SUPFAM" id="SSF55729">
    <property type="entry name" value="Acyl-CoA N-acyltransferases (Nat)"/>
    <property type="match status" value="1"/>
</dbReference>
<reference key="1">
    <citation type="journal article" date="2008" name="PLoS Pathog.">
        <title>Histoplasma requires SID1, a member of an iron-regulated siderophore gene cluster, for host colonization.</title>
        <authorList>
            <person name="Hwang L.H."/>
            <person name="Mayfield J.A."/>
            <person name="Rine J."/>
            <person name="Sil A."/>
        </authorList>
    </citation>
    <scope>NUCLEOTIDE SEQUENCE [GENOMIC DNA]</scope>
    <scope>FUNCTION</scope>
    <scope>INDUCTION</scope>
    <source>
        <strain>ATCC 26032 / G217B</strain>
    </source>
</reference>
<reference key="2">
    <citation type="journal article" date="2008" name="Biochemistry">
        <title>Sre1, an iron-modulated GATA DNA-binding protein of iron-uptake genes in the fungal pathogen Histoplasma capsulatum.</title>
        <authorList>
            <person name="Chao L.Y."/>
            <person name="Marletta M.A."/>
            <person name="Rine J."/>
        </authorList>
    </citation>
    <scope>INDUCTION</scope>
    <source>
        <strain>ATCC 26032 / G217B</strain>
    </source>
</reference>
<reference key="3">
    <citation type="journal article" date="2012" name="Eukaryot. Cell">
        <title>SRE1 regulates iron-dependent and -independent pathways in the fungal pathogen Histoplasma capsulatum.</title>
        <authorList>
            <person name="Hwang L.H."/>
            <person name="Seth E."/>
            <person name="Gilmore S.A."/>
            <person name="Sil A."/>
        </authorList>
    </citation>
    <scope>INDUCTION</scope>
</reference>
<feature type="chain" id="PRO_0000444394" description="Hydroxyornithine transacylase SID3">
    <location>
        <begin position="1"/>
        <end position="439"/>
    </location>
</feature>
<feature type="short sequence motif" description="PTS1-type peroxisomal targeting signal" evidence="1">
    <location>
        <begin position="437"/>
        <end position="439"/>
    </location>
</feature>
<organism>
    <name type="scientific">Ajellomyces capsulatus</name>
    <name type="common">Darling's disease fungus</name>
    <name type="synonym">Histoplasma capsulatum</name>
    <dbReference type="NCBI Taxonomy" id="5037"/>
    <lineage>
        <taxon>Eukaryota</taxon>
        <taxon>Fungi</taxon>
        <taxon>Dikarya</taxon>
        <taxon>Ascomycota</taxon>
        <taxon>Pezizomycotina</taxon>
        <taxon>Eurotiomycetes</taxon>
        <taxon>Eurotiomycetidae</taxon>
        <taxon>Onygenales</taxon>
        <taxon>Ajellomycetaceae</taxon>
        <taxon>Histoplasma</taxon>
    </lineage>
</organism>
<comment type="function">
    <text evidence="2">Hydroxyornithine transacylase; part of the gene cluster that mediates the biosynthesis of hydroxamate-containing siderophores that play a critical role in virulence via intracellular iron acquisition during macrophage infection (PubMed:18404210).</text>
</comment>
<comment type="pathway">
    <text evidence="6">Siderophore biosynthesis.</text>
</comment>
<comment type="subcellular location">
    <subcellularLocation>
        <location evidence="1">Peroxisome</location>
    </subcellularLocation>
    <text evidence="1">Targeted to peroxisomes via its PTS1-type peroxisomal targeting signal (By similarity).</text>
</comment>
<comment type="induction">
    <text evidence="2 3">Expression is induced during iron deprivation and is regulated by the transcription factor SRE1 (PubMed:18404210, PubMed:22117028).</text>
</comment>
<comment type="similarity">
    <text evidence="5">Belongs to the lysine N-acyltransferase mbtK family.</text>
</comment>